<gene>
    <name evidence="1" type="primary">aceK</name>
    <name type="ordered locus">PputW619_3866</name>
</gene>
<organism>
    <name type="scientific">Pseudomonas putida (strain W619)</name>
    <dbReference type="NCBI Taxonomy" id="390235"/>
    <lineage>
        <taxon>Bacteria</taxon>
        <taxon>Pseudomonadati</taxon>
        <taxon>Pseudomonadota</taxon>
        <taxon>Gammaproteobacteria</taxon>
        <taxon>Pseudomonadales</taxon>
        <taxon>Pseudomonadaceae</taxon>
        <taxon>Pseudomonas</taxon>
    </lineage>
</organism>
<keyword id="KW-0067">ATP-binding</keyword>
<keyword id="KW-0963">Cytoplasm</keyword>
<keyword id="KW-0329">Glyoxylate bypass</keyword>
<keyword id="KW-0378">Hydrolase</keyword>
<keyword id="KW-0418">Kinase</keyword>
<keyword id="KW-0547">Nucleotide-binding</keyword>
<keyword id="KW-0904">Protein phosphatase</keyword>
<keyword id="KW-0723">Serine/threonine-protein kinase</keyword>
<keyword id="KW-0808">Transferase</keyword>
<keyword id="KW-0816">Tricarboxylic acid cycle</keyword>
<feature type="chain" id="PRO_1000133274" description="Isocitrate dehydrogenase kinase/phosphatase">
    <location>
        <begin position="1"/>
        <end position="569"/>
    </location>
</feature>
<feature type="active site" evidence="1">
    <location>
        <position position="372"/>
    </location>
</feature>
<feature type="binding site" evidence="1">
    <location>
        <begin position="316"/>
        <end position="322"/>
    </location>
    <ligand>
        <name>ATP</name>
        <dbReference type="ChEBI" id="CHEBI:30616"/>
    </ligand>
</feature>
<feature type="binding site" evidence="1">
    <location>
        <position position="337"/>
    </location>
    <ligand>
        <name>ATP</name>
        <dbReference type="ChEBI" id="CHEBI:30616"/>
    </ligand>
</feature>
<accession>B1JCS1</accession>
<sequence>MTQHWPAGEIARMILDGFDDYREHFRRITLGARERFEQARWQDIQRAAAARINLYEQKVGEVNGWLRDGFDEEVLLEVEQWPLVKSAYIRLIDPRLDDELAETWYNSLFCSLFSHDQISDGCMFIHTTRPSIRSHERAAQTRTYMPDGSLKGLVRAIFRDYAFDYGDLESDLSRLEEQLRDCLPDWVCKDPALAVELFVPVLYRNKGAYLVGRLYNSDEQWPLVIPLLHREGHGIEADALITDEAEVSIIFSFTRSYFMVDVPVPAEFVNFLKRILPGKHIAELYTSIGFYKHGKSEFYRALINHLASTDDRFIMAPGVRGMVMSVFTLPGFNTVFKIIKDRFSPSKTVDRATVIDKYRLVKSVDRVGRMADTQEFADFRFPRGKFEPECLAELLEVAPSTVAVEGDTVLVRHCWTERRMIPLNLYLEQASEGQVLEALEDYGLAIKQLAAANIFPGDMLLKNFGVTRHGRVVFYDYDEISYLTEVNFRHIPPPRYPEDEMSGEPWYSIGPHDVFPEEFPPFLFADMGQRRLFSRLHGELYDADYWKGLQASIREGKVIDVFPYRRKGR</sequence>
<dbReference type="EC" id="2.7.11.5" evidence="1"/>
<dbReference type="EC" id="3.1.3.-" evidence="1"/>
<dbReference type="EMBL" id="CP000949">
    <property type="protein sequence ID" value="ACA74347.1"/>
    <property type="molecule type" value="Genomic_DNA"/>
</dbReference>
<dbReference type="SMR" id="B1JCS1"/>
<dbReference type="STRING" id="390235.PputW619_3866"/>
<dbReference type="KEGG" id="ppw:PputW619_3866"/>
<dbReference type="eggNOG" id="COG4579">
    <property type="taxonomic scope" value="Bacteria"/>
</dbReference>
<dbReference type="HOGENOM" id="CLU_033804_1_1_6"/>
<dbReference type="OrthoDB" id="5287793at2"/>
<dbReference type="GO" id="GO:0005737">
    <property type="term" value="C:cytoplasm"/>
    <property type="evidence" value="ECO:0007669"/>
    <property type="project" value="UniProtKB-SubCell"/>
</dbReference>
<dbReference type="GO" id="GO:0008772">
    <property type="term" value="F:[isocitrate dehydrogenase (NADP+)] kinase activity"/>
    <property type="evidence" value="ECO:0007669"/>
    <property type="project" value="UniProtKB-UniRule"/>
</dbReference>
<dbReference type="GO" id="GO:0016208">
    <property type="term" value="F:AMP binding"/>
    <property type="evidence" value="ECO:0007669"/>
    <property type="project" value="TreeGrafter"/>
</dbReference>
<dbReference type="GO" id="GO:0005524">
    <property type="term" value="F:ATP binding"/>
    <property type="evidence" value="ECO:0007669"/>
    <property type="project" value="UniProtKB-UniRule"/>
</dbReference>
<dbReference type="GO" id="GO:0004721">
    <property type="term" value="F:phosphoprotein phosphatase activity"/>
    <property type="evidence" value="ECO:0007669"/>
    <property type="project" value="UniProtKB-KW"/>
</dbReference>
<dbReference type="GO" id="GO:0004674">
    <property type="term" value="F:protein serine/threonine kinase activity"/>
    <property type="evidence" value="ECO:0007669"/>
    <property type="project" value="UniProtKB-KW"/>
</dbReference>
<dbReference type="GO" id="GO:0006006">
    <property type="term" value="P:glucose metabolic process"/>
    <property type="evidence" value="ECO:0007669"/>
    <property type="project" value="InterPro"/>
</dbReference>
<dbReference type="GO" id="GO:0006097">
    <property type="term" value="P:glyoxylate cycle"/>
    <property type="evidence" value="ECO:0007669"/>
    <property type="project" value="UniProtKB-UniRule"/>
</dbReference>
<dbReference type="GO" id="GO:0006099">
    <property type="term" value="P:tricarboxylic acid cycle"/>
    <property type="evidence" value="ECO:0007669"/>
    <property type="project" value="UniProtKB-UniRule"/>
</dbReference>
<dbReference type="HAMAP" id="MF_00747">
    <property type="entry name" value="AceK"/>
    <property type="match status" value="1"/>
</dbReference>
<dbReference type="InterPro" id="IPR046855">
    <property type="entry name" value="AceK_kinase"/>
</dbReference>
<dbReference type="InterPro" id="IPR046854">
    <property type="entry name" value="AceK_regulatory"/>
</dbReference>
<dbReference type="InterPro" id="IPR010452">
    <property type="entry name" value="Isocitrate_DH_AceK"/>
</dbReference>
<dbReference type="NCBIfam" id="NF002804">
    <property type="entry name" value="PRK02946.1"/>
    <property type="match status" value="1"/>
</dbReference>
<dbReference type="PANTHER" id="PTHR39559">
    <property type="match status" value="1"/>
</dbReference>
<dbReference type="PANTHER" id="PTHR39559:SF1">
    <property type="entry name" value="ISOCITRATE DEHYDROGENASE KINASE_PHOSPHATASE"/>
    <property type="match status" value="1"/>
</dbReference>
<dbReference type="Pfam" id="PF06315">
    <property type="entry name" value="AceK_kinase"/>
    <property type="match status" value="1"/>
</dbReference>
<dbReference type="Pfam" id="PF20423">
    <property type="entry name" value="AceK_regulatory"/>
    <property type="match status" value="1"/>
</dbReference>
<dbReference type="PIRSF" id="PIRSF000719">
    <property type="entry name" value="AceK"/>
    <property type="match status" value="1"/>
</dbReference>
<reference key="1">
    <citation type="submission" date="2008-02" db="EMBL/GenBank/DDBJ databases">
        <title>Complete sequence of Pseudomonas putida W619.</title>
        <authorList>
            <person name="Copeland A."/>
            <person name="Lucas S."/>
            <person name="Lapidus A."/>
            <person name="Barry K."/>
            <person name="Detter J.C."/>
            <person name="Glavina del Rio T."/>
            <person name="Dalin E."/>
            <person name="Tice H."/>
            <person name="Pitluck S."/>
            <person name="Chain P."/>
            <person name="Malfatti S."/>
            <person name="Shin M."/>
            <person name="Vergez L."/>
            <person name="Schmutz J."/>
            <person name="Larimer F."/>
            <person name="Land M."/>
            <person name="Hauser L."/>
            <person name="Kyrpides N."/>
            <person name="Kim E."/>
            <person name="Taghavi S."/>
            <person name="Vangronsveld D."/>
            <person name="van der Lelie D."/>
            <person name="Richardson P."/>
        </authorList>
    </citation>
    <scope>NUCLEOTIDE SEQUENCE [LARGE SCALE GENOMIC DNA]</scope>
    <source>
        <strain>W619</strain>
    </source>
</reference>
<evidence type="ECO:0000255" key="1">
    <source>
        <dbReference type="HAMAP-Rule" id="MF_00747"/>
    </source>
</evidence>
<comment type="function">
    <text evidence="1">Bifunctional enzyme which can phosphorylate or dephosphorylate isocitrate dehydrogenase (IDH) on a specific serine residue. This is a regulatory mechanism which enables bacteria to bypass the Krebs cycle via the glyoxylate shunt in response to the source of carbon. When bacteria are grown on glucose, IDH is fully active and unphosphorylated, but when grown on acetate or ethanol, the activity of IDH declines drastically concomitant with its phosphorylation.</text>
</comment>
<comment type="catalytic activity">
    <reaction evidence="1">
        <text>L-seryl-[isocitrate dehydrogenase] + ATP = O-phospho-L-seryl-[isocitrate dehydrogenase] + ADP + H(+)</text>
        <dbReference type="Rhea" id="RHEA:43540"/>
        <dbReference type="Rhea" id="RHEA-COMP:10605"/>
        <dbReference type="Rhea" id="RHEA-COMP:10606"/>
        <dbReference type="ChEBI" id="CHEBI:15378"/>
        <dbReference type="ChEBI" id="CHEBI:29999"/>
        <dbReference type="ChEBI" id="CHEBI:30616"/>
        <dbReference type="ChEBI" id="CHEBI:83421"/>
        <dbReference type="ChEBI" id="CHEBI:456216"/>
        <dbReference type="EC" id="2.7.11.5"/>
    </reaction>
</comment>
<comment type="subcellular location">
    <subcellularLocation>
        <location evidence="1">Cytoplasm</location>
    </subcellularLocation>
</comment>
<comment type="similarity">
    <text evidence="1">Belongs to the AceK family.</text>
</comment>
<proteinExistence type="inferred from homology"/>
<protein>
    <recommendedName>
        <fullName evidence="1">Isocitrate dehydrogenase kinase/phosphatase</fullName>
        <shortName evidence="1">IDH kinase/phosphatase</shortName>
        <shortName evidence="1">IDHK/P</shortName>
        <ecNumber evidence="1">2.7.11.5</ecNumber>
        <ecNumber evidence="1">3.1.3.-</ecNumber>
    </recommendedName>
</protein>
<name>ACEK_PSEPW</name>